<feature type="chain" id="PRO_1000054444" description="Large ribosomal subunit protein uL15">
    <location>
        <begin position="1"/>
        <end position="133"/>
    </location>
</feature>
<feature type="region of interest" description="Disordered" evidence="2">
    <location>
        <begin position="1"/>
        <end position="57"/>
    </location>
</feature>
<feature type="compositionally biased region" description="Gly residues" evidence="2">
    <location>
        <begin position="21"/>
        <end position="35"/>
    </location>
</feature>
<organism>
    <name type="scientific">Campylobacter concisus (strain 13826)</name>
    <dbReference type="NCBI Taxonomy" id="360104"/>
    <lineage>
        <taxon>Bacteria</taxon>
        <taxon>Pseudomonadati</taxon>
        <taxon>Campylobacterota</taxon>
        <taxon>Epsilonproteobacteria</taxon>
        <taxon>Campylobacterales</taxon>
        <taxon>Campylobacteraceae</taxon>
        <taxon>Campylobacter</taxon>
    </lineage>
</organism>
<dbReference type="EMBL" id="CP000792">
    <property type="protein sequence ID" value="EAT98128.1"/>
    <property type="molecule type" value="Genomic_DNA"/>
</dbReference>
<dbReference type="RefSeq" id="WP_002941506.1">
    <property type="nucleotide sequence ID" value="NC_009802.2"/>
</dbReference>
<dbReference type="SMR" id="A7ZFZ4"/>
<dbReference type="STRING" id="360104.CCC13826_1758"/>
<dbReference type="KEGG" id="cco:CCC13826_1758"/>
<dbReference type="eggNOG" id="COG0200">
    <property type="taxonomic scope" value="Bacteria"/>
</dbReference>
<dbReference type="HOGENOM" id="CLU_055188_6_0_7"/>
<dbReference type="OrthoDB" id="9810293at2"/>
<dbReference type="Proteomes" id="UP000001121">
    <property type="component" value="Chromosome"/>
</dbReference>
<dbReference type="GO" id="GO:0022625">
    <property type="term" value="C:cytosolic large ribosomal subunit"/>
    <property type="evidence" value="ECO:0007669"/>
    <property type="project" value="TreeGrafter"/>
</dbReference>
<dbReference type="GO" id="GO:0019843">
    <property type="term" value="F:rRNA binding"/>
    <property type="evidence" value="ECO:0007669"/>
    <property type="project" value="UniProtKB-UniRule"/>
</dbReference>
<dbReference type="GO" id="GO:0003735">
    <property type="term" value="F:structural constituent of ribosome"/>
    <property type="evidence" value="ECO:0007669"/>
    <property type="project" value="InterPro"/>
</dbReference>
<dbReference type="GO" id="GO:0006412">
    <property type="term" value="P:translation"/>
    <property type="evidence" value="ECO:0007669"/>
    <property type="project" value="UniProtKB-UniRule"/>
</dbReference>
<dbReference type="HAMAP" id="MF_01341">
    <property type="entry name" value="Ribosomal_uL15"/>
    <property type="match status" value="1"/>
</dbReference>
<dbReference type="InterPro" id="IPR030878">
    <property type="entry name" value="Ribosomal_uL15"/>
</dbReference>
<dbReference type="InterPro" id="IPR036227">
    <property type="entry name" value="Ribosomal_uL15/eL18_sf"/>
</dbReference>
<dbReference type="InterPro" id="IPR005749">
    <property type="entry name" value="Ribosomal_uL15_bac-type"/>
</dbReference>
<dbReference type="NCBIfam" id="TIGR01071">
    <property type="entry name" value="rplO_bact"/>
    <property type="match status" value="1"/>
</dbReference>
<dbReference type="PANTHER" id="PTHR12934">
    <property type="entry name" value="50S RIBOSOMAL PROTEIN L15"/>
    <property type="match status" value="1"/>
</dbReference>
<dbReference type="PANTHER" id="PTHR12934:SF11">
    <property type="entry name" value="LARGE RIBOSOMAL SUBUNIT PROTEIN UL15M"/>
    <property type="match status" value="1"/>
</dbReference>
<dbReference type="SUPFAM" id="SSF52080">
    <property type="entry name" value="Ribosomal proteins L15p and L18e"/>
    <property type="match status" value="1"/>
</dbReference>
<accession>A7ZFZ4</accession>
<reference key="1">
    <citation type="submission" date="2007-10" db="EMBL/GenBank/DDBJ databases">
        <title>Genome sequence of Campylobacter concisus 13826 isolated from human feces.</title>
        <authorList>
            <person name="Fouts D.E."/>
            <person name="Mongodin E.F."/>
            <person name="Puiu D."/>
            <person name="Sebastian Y."/>
            <person name="Miller W.G."/>
            <person name="Mandrell R.E."/>
            <person name="On S."/>
            <person name="Nelson K.E."/>
        </authorList>
    </citation>
    <scope>NUCLEOTIDE SEQUENCE [LARGE SCALE GENOMIC DNA]</scope>
    <source>
        <strain>13826</strain>
    </source>
</reference>
<proteinExistence type="inferred from homology"/>
<comment type="function">
    <text evidence="1">Binds to the 23S rRNA.</text>
</comment>
<comment type="subunit">
    <text evidence="1">Part of the 50S ribosomal subunit.</text>
</comment>
<comment type="similarity">
    <text evidence="1">Belongs to the universal ribosomal protein uL15 family.</text>
</comment>
<name>RL15_CAMC1</name>
<protein>
    <recommendedName>
        <fullName evidence="1">Large ribosomal subunit protein uL15</fullName>
    </recommendedName>
    <alternativeName>
        <fullName evidence="3">50S ribosomal protein L15</fullName>
    </alternativeName>
</protein>
<gene>
    <name evidence="1" type="primary">rplO</name>
    <name type="ordered locus">Ccon26_18670</name>
    <name type="ORF">CCC13826_1758</name>
</gene>
<keyword id="KW-0687">Ribonucleoprotein</keyword>
<keyword id="KW-0689">Ribosomal protein</keyword>
<keyword id="KW-0694">RNA-binding</keyword>
<keyword id="KW-0699">rRNA-binding</keyword>
<evidence type="ECO:0000255" key="1">
    <source>
        <dbReference type="HAMAP-Rule" id="MF_01341"/>
    </source>
</evidence>
<evidence type="ECO:0000256" key="2">
    <source>
        <dbReference type="SAM" id="MobiDB-lite"/>
    </source>
</evidence>
<evidence type="ECO:0000305" key="3"/>
<sequence>MALEKLTPAAGSTHATKRIGRGQGSGNGKTAGKGNKGQRARKGYNEKRGFEGGQQPLQRRLPKVGFASKFEKPYVINVEKIAAIKELAEISIATIASVHKISKSVTKIKLIGASAKALASKIKDENVSVSGTK</sequence>